<name>RLMH_ACICJ</name>
<protein>
    <recommendedName>
        <fullName evidence="1">Ribosomal RNA large subunit methyltransferase H</fullName>
        <ecNumber evidence="1">2.1.1.177</ecNumber>
    </recommendedName>
    <alternativeName>
        <fullName evidence="1">23S rRNA (pseudouridine1915-N3)-methyltransferase</fullName>
    </alternativeName>
    <alternativeName>
        <fullName evidence="1">23S rRNA m3Psi1915 methyltransferase</fullName>
    </alternativeName>
    <alternativeName>
        <fullName evidence="1">rRNA (pseudouridine-N3-)-methyltransferase RlmH</fullName>
    </alternativeName>
</protein>
<accession>A5FYS5</accession>
<feature type="chain" id="PRO_0000366548" description="Ribosomal RNA large subunit methyltransferase H">
    <location>
        <begin position="1"/>
        <end position="158"/>
    </location>
</feature>
<feature type="binding site" evidence="1">
    <location>
        <position position="72"/>
    </location>
    <ligand>
        <name>S-adenosyl-L-methionine</name>
        <dbReference type="ChEBI" id="CHEBI:59789"/>
    </ligand>
</feature>
<feature type="binding site" evidence="1">
    <location>
        <position position="103"/>
    </location>
    <ligand>
        <name>S-adenosyl-L-methionine</name>
        <dbReference type="ChEBI" id="CHEBI:59789"/>
    </ligand>
</feature>
<feature type="binding site" evidence="1">
    <location>
        <begin position="122"/>
        <end position="127"/>
    </location>
    <ligand>
        <name>S-adenosyl-L-methionine</name>
        <dbReference type="ChEBI" id="CHEBI:59789"/>
    </ligand>
</feature>
<reference key="1">
    <citation type="submission" date="2007-05" db="EMBL/GenBank/DDBJ databases">
        <title>Complete sequence of chromosome of Acidiphilium cryptum JF-5.</title>
        <authorList>
            <consortium name="US DOE Joint Genome Institute"/>
            <person name="Copeland A."/>
            <person name="Lucas S."/>
            <person name="Lapidus A."/>
            <person name="Barry K."/>
            <person name="Detter J.C."/>
            <person name="Glavina del Rio T."/>
            <person name="Hammon N."/>
            <person name="Israni S."/>
            <person name="Dalin E."/>
            <person name="Tice H."/>
            <person name="Pitluck S."/>
            <person name="Sims D."/>
            <person name="Brettin T."/>
            <person name="Bruce D."/>
            <person name="Han C."/>
            <person name="Schmutz J."/>
            <person name="Larimer F."/>
            <person name="Land M."/>
            <person name="Hauser L."/>
            <person name="Kyrpides N."/>
            <person name="Kim E."/>
            <person name="Magnuson T."/>
            <person name="Richardson P."/>
        </authorList>
    </citation>
    <scope>NUCLEOTIDE SEQUENCE [LARGE SCALE GENOMIC DNA]</scope>
    <source>
        <strain>JF-5</strain>
    </source>
</reference>
<organism>
    <name type="scientific">Acidiphilium cryptum (strain JF-5)</name>
    <dbReference type="NCBI Taxonomy" id="349163"/>
    <lineage>
        <taxon>Bacteria</taxon>
        <taxon>Pseudomonadati</taxon>
        <taxon>Pseudomonadota</taxon>
        <taxon>Alphaproteobacteria</taxon>
        <taxon>Acetobacterales</taxon>
        <taxon>Acidocellaceae</taxon>
        <taxon>Acidiphilium</taxon>
    </lineage>
</organism>
<dbReference type="EC" id="2.1.1.177" evidence="1"/>
<dbReference type="EMBL" id="CP000697">
    <property type="protein sequence ID" value="ABQ30757.1"/>
    <property type="molecule type" value="Genomic_DNA"/>
</dbReference>
<dbReference type="SMR" id="A5FYS5"/>
<dbReference type="STRING" id="349163.Acry_1551"/>
<dbReference type="KEGG" id="acr:Acry_1551"/>
<dbReference type="eggNOG" id="COG1576">
    <property type="taxonomic scope" value="Bacteria"/>
</dbReference>
<dbReference type="HOGENOM" id="CLU_100552_1_0_5"/>
<dbReference type="Proteomes" id="UP000000245">
    <property type="component" value="Chromosome"/>
</dbReference>
<dbReference type="GO" id="GO:0005737">
    <property type="term" value="C:cytoplasm"/>
    <property type="evidence" value="ECO:0007669"/>
    <property type="project" value="UniProtKB-SubCell"/>
</dbReference>
<dbReference type="GO" id="GO:0070038">
    <property type="term" value="F:rRNA (pseudouridine-N3-)-methyltransferase activity"/>
    <property type="evidence" value="ECO:0007669"/>
    <property type="project" value="UniProtKB-UniRule"/>
</dbReference>
<dbReference type="CDD" id="cd18081">
    <property type="entry name" value="RlmH-like"/>
    <property type="match status" value="1"/>
</dbReference>
<dbReference type="Gene3D" id="3.40.1280.10">
    <property type="match status" value="1"/>
</dbReference>
<dbReference type="HAMAP" id="MF_00658">
    <property type="entry name" value="23SrRNA_methyltr_H"/>
    <property type="match status" value="1"/>
</dbReference>
<dbReference type="InterPro" id="IPR029028">
    <property type="entry name" value="Alpha/beta_knot_MTases"/>
</dbReference>
<dbReference type="InterPro" id="IPR003742">
    <property type="entry name" value="RlmH-like"/>
</dbReference>
<dbReference type="InterPro" id="IPR029026">
    <property type="entry name" value="tRNA_m1G_MTases_N"/>
</dbReference>
<dbReference type="PANTHER" id="PTHR33603">
    <property type="entry name" value="METHYLTRANSFERASE"/>
    <property type="match status" value="1"/>
</dbReference>
<dbReference type="PANTHER" id="PTHR33603:SF1">
    <property type="entry name" value="RIBOSOMAL RNA LARGE SUBUNIT METHYLTRANSFERASE H"/>
    <property type="match status" value="1"/>
</dbReference>
<dbReference type="Pfam" id="PF02590">
    <property type="entry name" value="SPOUT_MTase"/>
    <property type="match status" value="1"/>
</dbReference>
<dbReference type="PIRSF" id="PIRSF004505">
    <property type="entry name" value="MT_bac"/>
    <property type="match status" value="1"/>
</dbReference>
<dbReference type="SUPFAM" id="SSF75217">
    <property type="entry name" value="alpha/beta knot"/>
    <property type="match status" value="1"/>
</dbReference>
<proteinExistence type="inferred from homology"/>
<keyword id="KW-0963">Cytoplasm</keyword>
<keyword id="KW-0489">Methyltransferase</keyword>
<keyword id="KW-1185">Reference proteome</keyword>
<keyword id="KW-0698">rRNA processing</keyword>
<keyword id="KW-0949">S-adenosyl-L-methionine</keyword>
<keyword id="KW-0808">Transferase</keyword>
<gene>
    <name evidence="1" type="primary">rlmH</name>
    <name type="ordered locus">Acry_1551</name>
</gene>
<sequence length="158" mass="16899">MTAPGARLRIIAIGRDSKGPEADLVARYAARLQPRPEVVALPDGTGSPAEIKRREADAILRRLAAEDLVIALDLGGKAPDSAAFAAMLASWRETSRPLAFVIGGAEGLERRIIERADAVLSLGNLTLPHLLARAVLAEQLYRAQCILAGHPYHRAGRP</sequence>
<evidence type="ECO:0000255" key="1">
    <source>
        <dbReference type="HAMAP-Rule" id="MF_00658"/>
    </source>
</evidence>
<comment type="function">
    <text evidence="1">Specifically methylates the pseudouridine at position 1915 (m3Psi1915) in 23S rRNA.</text>
</comment>
<comment type="catalytic activity">
    <reaction evidence="1">
        <text>pseudouridine(1915) in 23S rRNA + S-adenosyl-L-methionine = N(3)-methylpseudouridine(1915) in 23S rRNA + S-adenosyl-L-homocysteine + H(+)</text>
        <dbReference type="Rhea" id="RHEA:42752"/>
        <dbReference type="Rhea" id="RHEA-COMP:10221"/>
        <dbReference type="Rhea" id="RHEA-COMP:10222"/>
        <dbReference type="ChEBI" id="CHEBI:15378"/>
        <dbReference type="ChEBI" id="CHEBI:57856"/>
        <dbReference type="ChEBI" id="CHEBI:59789"/>
        <dbReference type="ChEBI" id="CHEBI:65314"/>
        <dbReference type="ChEBI" id="CHEBI:74486"/>
        <dbReference type="EC" id="2.1.1.177"/>
    </reaction>
</comment>
<comment type="subunit">
    <text evidence="1">Homodimer.</text>
</comment>
<comment type="subcellular location">
    <subcellularLocation>
        <location evidence="1">Cytoplasm</location>
    </subcellularLocation>
</comment>
<comment type="similarity">
    <text evidence="1">Belongs to the RNA methyltransferase RlmH family.</text>
</comment>